<sequence>MKKLTLAELATITGGELFGDESLVVGRVAPMDKAQEGDVTFLSNPKYAKHLSECKATVVMVKAEHKDQCAGNALVVADPYVAFARVVQAMDTTPKPAEDIAPSAVIASDVKMGENVAIGANAVIETGVELGDNVVIGAGCFIGKNAKLGNNTKLWANVTIYHEVSLGDDCLVQSGTVIGSDGFGYANDRGEWIKIPQLGSVRIGNRVEIGACTTIDRGALEDTIIEDNVILDNQLQIAHNVQIGYGTVMPGGTIVAGSTKIGKYCQIGGASVLNGHITIADGVAITGMGMVMRSIEEKGLYSSGIPLQTNREWRKTATRVHRIDEMNKRLKAVEKQLEQKEES</sequence>
<name>LPXD_VIBPA</name>
<evidence type="ECO:0000255" key="1">
    <source>
        <dbReference type="HAMAP-Rule" id="MF_00523"/>
    </source>
</evidence>
<dbReference type="EC" id="2.3.1.191" evidence="1"/>
<dbReference type="EMBL" id="BA000031">
    <property type="protein sequence ID" value="BAC60571.1"/>
    <property type="molecule type" value="Genomic_DNA"/>
</dbReference>
<dbReference type="RefSeq" id="NP_798687.1">
    <property type="nucleotide sequence ID" value="NC_004603.1"/>
</dbReference>
<dbReference type="RefSeq" id="WP_005480972.1">
    <property type="nucleotide sequence ID" value="NC_004603.1"/>
</dbReference>
<dbReference type="SMR" id="Q87ME7"/>
<dbReference type="GeneID" id="1189821"/>
<dbReference type="KEGG" id="vpa:VP2308"/>
<dbReference type="PATRIC" id="fig|223926.6.peg.2210"/>
<dbReference type="eggNOG" id="COG1044">
    <property type="taxonomic scope" value="Bacteria"/>
</dbReference>
<dbReference type="HOGENOM" id="CLU_049865_0_1_6"/>
<dbReference type="UniPathway" id="UPA00973"/>
<dbReference type="Proteomes" id="UP000002493">
    <property type="component" value="Chromosome 1"/>
</dbReference>
<dbReference type="GO" id="GO:0016020">
    <property type="term" value="C:membrane"/>
    <property type="evidence" value="ECO:0007669"/>
    <property type="project" value="GOC"/>
</dbReference>
<dbReference type="GO" id="GO:0016410">
    <property type="term" value="F:N-acyltransferase activity"/>
    <property type="evidence" value="ECO:0007669"/>
    <property type="project" value="InterPro"/>
</dbReference>
<dbReference type="GO" id="GO:0009245">
    <property type="term" value="P:lipid A biosynthetic process"/>
    <property type="evidence" value="ECO:0007669"/>
    <property type="project" value="UniProtKB-UniRule"/>
</dbReference>
<dbReference type="CDD" id="cd03352">
    <property type="entry name" value="LbH_LpxD"/>
    <property type="match status" value="1"/>
</dbReference>
<dbReference type="FunFam" id="2.160.10.10:FF:000005">
    <property type="entry name" value="UDP-3-O-(3-hydroxymyristoyl)glucosamine N-acyltransferase"/>
    <property type="match status" value="1"/>
</dbReference>
<dbReference type="Gene3D" id="1.20.5.170">
    <property type="match status" value="1"/>
</dbReference>
<dbReference type="Gene3D" id="2.160.10.10">
    <property type="entry name" value="Hexapeptide repeat proteins"/>
    <property type="match status" value="1"/>
</dbReference>
<dbReference type="Gene3D" id="3.40.1390.10">
    <property type="entry name" value="MurE/MurF, N-terminal domain"/>
    <property type="match status" value="1"/>
</dbReference>
<dbReference type="HAMAP" id="MF_00523">
    <property type="entry name" value="LpxD"/>
    <property type="match status" value="1"/>
</dbReference>
<dbReference type="InterPro" id="IPR001451">
    <property type="entry name" value="Hexapep"/>
</dbReference>
<dbReference type="InterPro" id="IPR007691">
    <property type="entry name" value="LpxD"/>
</dbReference>
<dbReference type="InterPro" id="IPR011004">
    <property type="entry name" value="Trimer_LpxA-like_sf"/>
</dbReference>
<dbReference type="InterPro" id="IPR020573">
    <property type="entry name" value="UDP_GlcNAc_AcTrfase_non-rep"/>
</dbReference>
<dbReference type="NCBIfam" id="TIGR01853">
    <property type="entry name" value="lipid_A_lpxD"/>
    <property type="match status" value="1"/>
</dbReference>
<dbReference type="NCBIfam" id="NF002060">
    <property type="entry name" value="PRK00892.1"/>
    <property type="match status" value="1"/>
</dbReference>
<dbReference type="PANTHER" id="PTHR43378">
    <property type="entry name" value="UDP-3-O-ACYLGLUCOSAMINE N-ACYLTRANSFERASE"/>
    <property type="match status" value="1"/>
</dbReference>
<dbReference type="PANTHER" id="PTHR43378:SF2">
    <property type="entry name" value="UDP-3-O-ACYLGLUCOSAMINE N-ACYLTRANSFERASE 1, MITOCHONDRIAL-RELATED"/>
    <property type="match status" value="1"/>
</dbReference>
<dbReference type="Pfam" id="PF00132">
    <property type="entry name" value="Hexapep"/>
    <property type="match status" value="2"/>
</dbReference>
<dbReference type="Pfam" id="PF04613">
    <property type="entry name" value="LpxD"/>
    <property type="match status" value="1"/>
</dbReference>
<dbReference type="SUPFAM" id="SSF51161">
    <property type="entry name" value="Trimeric LpxA-like enzymes"/>
    <property type="match status" value="1"/>
</dbReference>
<dbReference type="PROSITE" id="PS00101">
    <property type="entry name" value="HEXAPEP_TRANSFERASES"/>
    <property type="match status" value="1"/>
</dbReference>
<accession>Q87ME7</accession>
<gene>
    <name evidence="1" type="primary">lpxD</name>
    <name type="ordered locus">VP2308</name>
</gene>
<feature type="chain" id="PRO_0000059708" description="UDP-3-O-acylglucosamine N-acyltransferase">
    <location>
        <begin position="1"/>
        <end position="343"/>
    </location>
</feature>
<feature type="active site" description="Proton acceptor" evidence="1">
    <location>
        <position position="239"/>
    </location>
</feature>
<protein>
    <recommendedName>
        <fullName evidence="1">UDP-3-O-acylglucosamine N-acyltransferase</fullName>
        <ecNumber evidence="1">2.3.1.191</ecNumber>
    </recommendedName>
</protein>
<comment type="function">
    <text evidence="1">Catalyzes the N-acylation of UDP-3-O-acylglucosamine using 3-hydroxyacyl-ACP as the acyl donor. Is involved in the biosynthesis of lipid A, a phosphorylated glycolipid that anchors the lipopolysaccharide to the outer membrane of the cell.</text>
</comment>
<comment type="catalytic activity">
    <reaction evidence="1">
        <text>a UDP-3-O-[(3R)-3-hydroxyacyl]-alpha-D-glucosamine + a (3R)-hydroxyacyl-[ACP] = a UDP-2-N,3-O-bis[(3R)-3-hydroxyacyl]-alpha-D-glucosamine + holo-[ACP] + H(+)</text>
        <dbReference type="Rhea" id="RHEA:53836"/>
        <dbReference type="Rhea" id="RHEA-COMP:9685"/>
        <dbReference type="Rhea" id="RHEA-COMP:9945"/>
        <dbReference type="ChEBI" id="CHEBI:15378"/>
        <dbReference type="ChEBI" id="CHEBI:64479"/>
        <dbReference type="ChEBI" id="CHEBI:78827"/>
        <dbReference type="ChEBI" id="CHEBI:137740"/>
        <dbReference type="ChEBI" id="CHEBI:137748"/>
        <dbReference type="EC" id="2.3.1.191"/>
    </reaction>
</comment>
<comment type="pathway">
    <text evidence="1">Bacterial outer membrane biogenesis; LPS lipid A biosynthesis.</text>
</comment>
<comment type="subunit">
    <text evidence="1">Homotrimer.</text>
</comment>
<comment type="similarity">
    <text evidence="1">Belongs to the transferase hexapeptide repeat family. LpxD subfamily.</text>
</comment>
<keyword id="KW-0012">Acyltransferase</keyword>
<keyword id="KW-0441">Lipid A biosynthesis</keyword>
<keyword id="KW-0444">Lipid biosynthesis</keyword>
<keyword id="KW-0443">Lipid metabolism</keyword>
<keyword id="KW-0677">Repeat</keyword>
<keyword id="KW-0808">Transferase</keyword>
<organism>
    <name type="scientific">Vibrio parahaemolyticus serotype O3:K6 (strain RIMD 2210633)</name>
    <dbReference type="NCBI Taxonomy" id="223926"/>
    <lineage>
        <taxon>Bacteria</taxon>
        <taxon>Pseudomonadati</taxon>
        <taxon>Pseudomonadota</taxon>
        <taxon>Gammaproteobacteria</taxon>
        <taxon>Vibrionales</taxon>
        <taxon>Vibrionaceae</taxon>
        <taxon>Vibrio</taxon>
    </lineage>
</organism>
<proteinExistence type="inferred from homology"/>
<reference key="1">
    <citation type="journal article" date="2003" name="Lancet">
        <title>Genome sequence of Vibrio parahaemolyticus: a pathogenic mechanism distinct from that of V. cholerae.</title>
        <authorList>
            <person name="Makino K."/>
            <person name="Oshima K."/>
            <person name="Kurokawa K."/>
            <person name="Yokoyama K."/>
            <person name="Uda T."/>
            <person name="Tagomori K."/>
            <person name="Iijima Y."/>
            <person name="Najima M."/>
            <person name="Nakano M."/>
            <person name="Yamashita A."/>
            <person name="Kubota Y."/>
            <person name="Kimura S."/>
            <person name="Yasunaga T."/>
            <person name="Honda T."/>
            <person name="Shinagawa H."/>
            <person name="Hattori M."/>
            <person name="Iida T."/>
        </authorList>
    </citation>
    <scope>NUCLEOTIDE SEQUENCE [LARGE SCALE GENOMIC DNA]</scope>
    <source>
        <strain>RIMD 2210633</strain>
    </source>
</reference>